<reference key="1">
    <citation type="journal article" date="2010" name="PLoS Genet.">
        <title>Genome sequence of the plant growth promoting endophytic bacterium Enterobacter sp. 638.</title>
        <authorList>
            <person name="Taghavi S."/>
            <person name="van der Lelie D."/>
            <person name="Hoffman A."/>
            <person name="Zhang Y.B."/>
            <person name="Walla M.D."/>
            <person name="Vangronsveld J."/>
            <person name="Newman L."/>
            <person name="Monchy S."/>
        </authorList>
    </citation>
    <scope>NUCLEOTIDE SEQUENCE [LARGE SCALE GENOMIC DNA]</scope>
    <source>
        <strain>638</strain>
    </source>
</reference>
<protein>
    <recommendedName>
        <fullName evidence="1">Glutathione-regulated potassium-efflux system protein KefB</fullName>
    </recommendedName>
    <alternativeName>
        <fullName evidence="1">K(+)/H(+) antiporter</fullName>
    </alternativeName>
</protein>
<organism>
    <name type="scientific">Enterobacter sp. (strain 638)</name>
    <dbReference type="NCBI Taxonomy" id="399742"/>
    <lineage>
        <taxon>Bacteria</taxon>
        <taxon>Pseudomonadati</taxon>
        <taxon>Pseudomonadota</taxon>
        <taxon>Gammaproteobacteria</taxon>
        <taxon>Enterobacterales</taxon>
        <taxon>Enterobacteriaceae</taxon>
        <taxon>Enterobacter</taxon>
    </lineage>
</organism>
<proteinExistence type="inferred from homology"/>
<evidence type="ECO:0000255" key="1">
    <source>
        <dbReference type="HAMAP-Rule" id="MF_01412"/>
    </source>
</evidence>
<evidence type="ECO:0000255" key="2">
    <source>
        <dbReference type="PROSITE-ProRule" id="PRU00543"/>
    </source>
</evidence>
<sequence>MEGTDLLLAGVLFLFAAVVAVPLAARLGIGAVLGYLLAGIAIGPWGLGFISDVDEILHFSELGVVFLMFIIGLELNPAKLWQLRRSIFGVGAAQVLFSAVILGGLLMLTQFKWQAAVIGGIGLAMSSTAMALQLMRDKGMNRNESGQLGFSVLLFQDLAVIPALALVPLLAGSGDDHFDWMKVGMKVLAFVGMLIGGRYLLRPVFRFIAASGVREVFTAATLLLVLGSALFMDALGLSMALGTFIAGILLAESEYRHELEIAIDPFKGLLLGLFFISVGMALNLGVLYTHLLWVVVSVAVLVAVKTGVLYTLARIYGLRSSERMQFAGVLSQGGEFAFVLFSTAASQRLFQDDQMALLLVTVTLSMMTTPLLMKLIDKLLSRRFNQPDDEDEAPWVEDDKPQVIVVGFGRFGQVIGRLLMANKMRITVLERDISAVNLMRKYGYKVYYGDATQLELLRSAGAEAAESIIITCNEPEDTMKLVELCQQHFPHLHILARARGRVEAHELLQAGVTNFSRETFSSALELGRKALVSLGMHPHQAQRAQMHFRRLDMRMLRELMPVHSDTAQISRVREARRELEEIFQREMQQERRQFDGWDEFE</sequence>
<accession>A4WFE4</accession>
<keyword id="KW-0050">Antiport</keyword>
<keyword id="KW-0997">Cell inner membrane</keyword>
<keyword id="KW-1003">Cell membrane</keyword>
<keyword id="KW-0406">Ion transport</keyword>
<keyword id="KW-0472">Membrane</keyword>
<keyword id="KW-0630">Potassium</keyword>
<keyword id="KW-0633">Potassium transport</keyword>
<keyword id="KW-0812">Transmembrane</keyword>
<keyword id="KW-1133">Transmembrane helix</keyword>
<keyword id="KW-0813">Transport</keyword>
<name>KEFB_ENT38</name>
<feature type="chain" id="PRO_1000068456" description="Glutathione-regulated potassium-efflux system protein KefB">
    <location>
        <begin position="1"/>
        <end position="601"/>
    </location>
</feature>
<feature type="transmembrane region" description="Helical" evidence="1">
    <location>
        <begin position="5"/>
        <end position="25"/>
    </location>
</feature>
<feature type="transmembrane region" description="Helical" evidence="1">
    <location>
        <begin position="29"/>
        <end position="49"/>
    </location>
</feature>
<feature type="transmembrane region" description="Helical" evidence="1">
    <location>
        <begin position="55"/>
        <end position="75"/>
    </location>
</feature>
<feature type="transmembrane region" description="Helical" evidence="1">
    <location>
        <begin position="87"/>
        <end position="107"/>
    </location>
</feature>
<feature type="transmembrane region" description="Helical" evidence="1">
    <location>
        <begin position="115"/>
        <end position="135"/>
    </location>
</feature>
<feature type="transmembrane region" description="Helical" evidence="1">
    <location>
        <begin position="152"/>
        <end position="172"/>
    </location>
</feature>
<feature type="transmembrane region" description="Helical" evidence="1">
    <location>
        <begin position="177"/>
        <end position="197"/>
    </location>
</feature>
<feature type="transmembrane region" description="Helical" evidence="1">
    <location>
        <begin position="207"/>
        <end position="227"/>
    </location>
</feature>
<feature type="transmembrane region" description="Helical" evidence="1">
    <location>
        <begin position="230"/>
        <end position="250"/>
    </location>
</feature>
<feature type="transmembrane region" description="Helical" evidence="1">
    <location>
        <begin position="261"/>
        <end position="281"/>
    </location>
</feature>
<feature type="transmembrane region" description="Helical" evidence="1">
    <location>
        <begin position="284"/>
        <end position="304"/>
    </location>
</feature>
<feature type="transmembrane region" description="Helical" evidence="1">
    <location>
        <begin position="326"/>
        <end position="346"/>
    </location>
</feature>
<feature type="transmembrane region" description="Helical" evidence="1">
    <location>
        <begin position="356"/>
        <end position="376"/>
    </location>
</feature>
<feature type="domain" description="RCK N-terminal" evidence="2">
    <location>
        <begin position="400"/>
        <end position="518"/>
    </location>
</feature>
<dbReference type="EMBL" id="CP000653">
    <property type="protein sequence ID" value="ABP62424.1"/>
    <property type="molecule type" value="Genomic_DNA"/>
</dbReference>
<dbReference type="RefSeq" id="WP_015960730.1">
    <property type="nucleotide sequence ID" value="NC_009436.1"/>
</dbReference>
<dbReference type="SMR" id="A4WFE4"/>
<dbReference type="STRING" id="399742.Ent638_3768"/>
<dbReference type="KEGG" id="ent:Ent638_3768"/>
<dbReference type="eggNOG" id="COG0475">
    <property type="taxonomic scope" value="Bacteria"/>
</dbReference>
<dbReference type="eggNOG" id="COG1226">
    <property type="taxonomic scope" value="Bacteria"/>
</dbReference>
<dbReference type="HOGENOM" id="CLU_005126_9_3_6"/>
<dbReference type="OrthoDB" id="9781411at2"/>
<dbReference type="Proteomes" id="UP000000230">
    <property type="component" value="Chromosome"/>
</dbReference>
<dbReference type="GO" id="GO:0005886">
    <property type="term" value="C:plasma membrane"/>
    <property type="evidence" value="ECO:0007669"/>
    <property type="project" value="UniProtKB-SubCell"/>
</dbReference>
<dbReference type="GO" id="GO:0015503">
    <property type="term" value="F:glutathione-regulated potassium exporter activity"/>
    <property type="evidence" value="ECO:0007669"/>
    <property type="project" value="UniProtKB-UniRule"/>
</dbReference>
<dbReference type="GO" id="GO:1902600">
    <property type="term" value="P:proton transmembrane transport"/>
    <property type="evidence" value="ECO:0007669"/>
    <property type="project" value="InterPro"/>
</dbReference>
<dbReference type="FunFam" id="1.20.1530.20:FF:000001">
    <property type="entry name" value="Glutathione-regulated potassium-efflux system protein KefB"/>
    <property type="match status" value="1"/>
</dbReference>
<dbReference type="FunFam" id="3.40.50.720:FF:000036">
    <property type="entry name" value="Glutathione-regulated potassium-efflux system protein KefB"/>
    <property type="match status" value="1"/>
</dbReference>
<dbReference type="Gene3D" id="1.20.1530.20">
    <property type="match status" value="1"/>
</dbReference>
<dbReference type="Gene3D" id="3.40.50.720">
    <property type="entry name" value="NAD(P)-binding Rossmann-like Domain"/>
    <property type="match status" value="1"/>
</dbReference>
<dbReference type="HAMAP" id="MF_01412">
    <property type="entry name" value="K_H_efflux_KefB"/>
    <property type="match status" value="1"/>
</dbReference>
<dbReference type="InterPro" id="IPR006153">
    <property type="entry name" value="Cation/H_exchanger_TM"/>
</dbReference>
<dbReference type="InterPro" id="IPR004771">
    <property type="entry name" value="K/H_exchanger"/>
</dbReference>
<dbReference type="InterPro" id="IPR020884">
    <property type="entry name" value="K_H_efflux_KefB"/>
</dbReference>
<dbReference type="InterPro" id="IPR038770">
    <property type="entry name" value="Na+/solute_symporter_sf"/>
</dbReference>
<dbReference type="InterPro" id="IPR036291">
    <property type="entry name" value="NAD(P)-bd_dom_sf"/>
</dbReference>
<dbReference type="InterPro" id="IPR003148">
    <property type="entry name" value="RCK_N"/>
</dbReference>
<dbReference type="NCBIfam" id="TIGR00932">
    <property type="entry name" value="2a37"/>
    <property type="match status" value="1"/>
</dbReference>
<dbReference type="NCBIfam" id="NF002973">
    <property type="entry name" value="PRK03659.1"/>
    <property type="match status" value="1"/>
</dbReference>
<dbReference type="PANTHER" id="PTHR46157">
    <property type="entry name" value="K(+) EFFLUX ANTIPORTER 3, CHLOROPLASTIC"/>
    <property type="match status" value="1"/>
</dbReference>
<dbReference type="PANTHER" id="PTHR46157:SF4">
    <property type="entry name" value="K(+) EFFLUX ANTIPORTER 3, CHLOROPLASTIC"/>
    <property type="match status" value="1"/>
</dbReference>
<dbReference type="Pfam" id="PF00999">
    <property type="entry name" value="Na_H_Exchanger"/>
    <property type="match status" value="1"/>
</dbReference>
<dbReference type="Pfam" id="PF02254">
    <property type="entry name" value="TrkA_N"/>
    <property type="match status" value="1"/>
</dbReference>
<dbReference type="SUPFAM" id="SSF51735">
    <property type="entry name" value="NAD(P)-binding Rossmann-fold domains"/>
    <property type="match status" value="1"/>
</dbReference>
<dbReference type="PROSITE" id="PS51201">
    <property type="entry name" value="RCK_N"/>
    <property type="match status" value="1"/>
</dbReference>
<gene>
    <name evidence="1" type="primary">kefB</name>
    <name type="ordered locus">Ent638_3768</name>
</gene>
<comment type="function">
    <text evidence="1">Pore-forming subunit of a potassium efflux system that confers protection against electrophiles. Catalyzes K(+)/H(+) antiport.</text>
</comment>
<comment type="subunit">
    <text evidence="1">Interacts with the regulatory subunit KefG.</text>
</comment>
<comment type="subcellular location">
    <subcellularLocation>
        <location evidence="1">Cell inner membrane</location>
        <topology evidence="1">Multi-pass membrane protein</topology>
    </subcellularLocation>
</comment>
<comment type="similarity">
    <text evidence="1">Belongs to the monovalent cation:proton antiporter 2 (CPA2) transporter (TC 2.A.37) family. KefB subfamily.</text>
</comment>